<proteinExistence type="inferred from homology"/>
<gene>
    <name type="ORF">Bm1_53365</name>
</gene>
<dbReference type="EC" id="5.6.1.1"/>
<dbReference type="EMBL" id="DS239470">
    <property type="protein sequence ID" value="EDP29011.1"/>
    <property type="molecule type" value="Genomic_DNA"/>
</dbReference>
<dbReference type="SMR" id="A8QFF6"/>
<dbReference type="FunCoup" id="A8QFF6">
    <property type="interactions" value="1237"/>
</dbReference>
<dbReference type="STRING" id="6279.A8QFF6"/>
<dbReference type="EnsemblMetazoa" id="Bm2335b.1">
    <property type="protein sequence ID" value="Bm2335b.1"/>
    <property type="gene ID" value="WBGene00222596"/>
</dbReference>
<dbReference type="GeneID" id="6105557"/>
<dbReference type="KEGG" id="bmy:BM_BM2335"/>
<dbReference type="CTD" id="6105557"/>
<dbReference type="WormBase" id="Bm2335a">
    <property type="protein sequence ID" value="BM25701"/>
    <property type="gene ID" value="WBGene00222596"/>
    <property type="gene designation" value="Bma-spas-1"/>
</dbReference>
<dbReference type="HOGENOM" id="CLU_000688_21_12_1"/>
<dbReference type="InParanoid" id="A8QFF6"/>
<dbReference type="OrthoDB" id="10251136at2759"/>
<dbReference type="Proteomes" id="UP000006672">
    <property type="component" value="Unassembled WGS sequence"/>
</dbReference>
<dbReference type="GO" id="GO:0005737">
    <property type="term" value="C:cytoplasm"/>
    <property type="evidence" value="ECO:0000250"/>
    <property type="project" value="UniProtKB"/>
</dbReference>
<dbReference type="GO" id="GO:0005874">
    <property type="term" value="C:microtubule"/>
    <property type="evidence" value="ECO:0007669"/>
    <property type="project" value="UniProtKB-KW"/>
</dbReference>
<dbReference type="GO" id="GO:0048471">
    <property type="term" value="C:perinuclear region of cytoplasm"/>
    <property type="evidence" value="ECO:0000250"/>
    <property type="project" value="UniProtKB"/>
</dbReference>
<dbReference type="GO" id="GO:0005524">
    <property type="term" value="F:ATP binding"/>
    <property type="evidence" value="ECO:0007669"/>
    <property type="project" value="UniProtKB-KW"/>
</dbReference>
<dbReference type="GO" id="GO:0016887">
    <property type="term" value="F:ATP hydrolysis activity"/>
    <property type="evidence" value="ECO:0007669"/>
    <property type="project" value="InterPro"/>
</dbReference>
<dbReference type="GO" id="GO:0008568">
    <property type="term" value="F:microtubule severing ATPase activity"/>
    <property type="evidence" value="ECO:0007669"/>
    <property type="project" value="UniProtKB-EC"/>
</dbReference>
<dbReference type="CDD" id="cd19509">
    <property type="entry name" value="RecA-like_VPS4-like"/>
    <property type="match status" value="1"/>
</dbReference>
<dbReference type="FunFam" id="3.40.50.300:FF:001054">
    <property type="entry name" value="ATPase, AAA family, putative"/>
    <property type="match status" value="1"/>
</dbReference>
<dbReference type="FunFam" id="1.20.58.80:FF:000042">
    <property type="entry name" value="BMA-SPAS-1, isoform d"/>
    <property type="match status" value="1"/>
</dbReference>
<dbReference type="FunFam" id="1.10.8.60:FF:000215">
    <property type="entry name" value="BMA-SPAS-1, isoform e"/>
    <property type="match status" value="1"/>
</dbReference>
<dbReference type="Gene3D" id="1.10.8.60">
    <property type="match status" value="1"/>
</dbReference>
<dbReference type="Gene3D" id="3.40.50.300">
    <property type="entry name" value="P-loop containing nucleotide triphosphate hydrolases"/>
    <property type="match status" value="1"/>
</dbReference>
<dbReference type="Gene3D" id="1.20.58.80">
    <property type="entry name" value="Phosphotransferase system, lactose/cellobiose-type IIA subunit"/>
    <property type="match status" value="1"/>
</dbReference>
<dbReference type="InterPro" id="IPR003593">
    <property type="entry name" value="AAA+_ATPase"/>
</dbReference>
<dbReference type="InterPro" id="IPR041569">
    <property type="entry name" value="AAA_lid_3"/>
</dbReference>
<dbReference type="InterPro" id="IPR003959">
    <property type="entry name" value="ATPase_AAA_core"/>
</dbReference>
<dbReference type="InterPro" id="IPR003960">
    <property type="entry name" value="ATPase_AAA_CS"/>
</dbReference>
<dbReference type="InterPro" id="IPR050304">
    <property type="entry name" value="MT-severing_AAA_ATPase"/>
</dbReference>
<dbReference type="InterPro" id="IPR027417">
    <property type="entry name" value="P-loop_NTPase"/>
</dbReference>
<dbReference type="PANTHER" id="PTHR23074">
    <property type="entry name" value="AAA DOMAIN-CONTAINING"/>
    <property type="match status" value="1"/>
</dbReference>
<dbReference type="PANTHER" id="PTHR23074:SF86">
    <property type="entry name" value="SPASTIN"/>
    <property type="match status" value="1"/>
</dbReference>
<dbReference type="Pfam" id="PF00004">
    <property type="entry name" value="AAA"/>
    <property type="match status" value="1"/>
</dbReference>
<dbReference type="Pfam" id="PF17862">
    <property type="entry name" value="AAA_lid_3"/>
    <property type="match status" value="1"/>
</dbReference>
<dbReference type="SMART" id="SM00382">
    <property type="entry name" value="AAA"/>
    <property type="match status" value="1"/>
</dbReference>
<dbReference type="SUPFAM" id="SSF52540">
    <property type="entry name" value="P-loop containing nucleoside triphosphate hydrolases"/>
    <property type="match status" value="1"/>
</dbReference>
<dbReference type="PROSITE" id="PS00674">
    <property type="entry name" value="AAA"/>
    <property type="match status" value="1"/>
</dbReference>
<reference key="1">
    <citation type="journal article" date="2007" name="Science">
        <title>Draft genome of the filarial nematode parasite Brugia malayi.</title>
        <authorList>
            <person name="Ghedin E."/>
            <person name="Wang S."/>
            <person name="Spiro D."/>
            <person name="Caler E."/>
            <person name="Zhao Q."/>
            <person name="Crabtree J."/>
            <person name="Allen J.E."/>
            <person name="Delcher A.L."/>
            <person name="Guiliano D.B."/>
            <person name="Miranda-Saavedra D."/>
            <person name="Angiuoli S.V."/>
            <person name="Creasy T."/>
            <person name="Amedeo P."/>
            <person name="Haas B."/>
            <person name="El-Sayed N.M."/>
            <person name="Wortman J.R."/>
            <person name="Feldblyum T."/>
            <person name="Tallon L."/>
            <person name="Schatz M."/>
            <person name="Shumway M."/>
            <person name="Koo H."/>
            <person name="Salzberg S.L."/>
            <person name="Schobel S."/>
            <person name="Pertea M."/>
            <person name="Pop M."/>
            <person name="White O."/>
            <person name="Barton G.J."/>
            <person name="Carlow C.K.S."/>
            <person name="Crawford M.J."/>
            <person name="Daub J."/>
            <person name="Dimmic M.W."/>
            <person name="Estes C.F."/>
            <person name="Foster J.M."/>
            <person name="Ganatra M."/>
            <person name="Gregory W.F."/>
            <person name="Johnson N.M."/>
            <person name="Jin J."/>
            <person name="Komuniecki R."/>
            <person name="Korf I."/>
            <person name="Kumar S."/>
            <person name="Laney S."/>
            <person name="Li B.-W."/>
            <person name="Li W."/>
            <person name="Lindblom T.H."/>
            <person name="Lustigman S."/>
            <person name="Ma D."/>
            <person name="Maina C.V."/>
            <person name="Martin D.M."/>
            <person name="McCarter J.P."/>
            <person name="McReynolds L."/>
            <person name="Mitreva M."/>
            <person name="Nutman T.B."/>
            <person name="Parkinson J."/>
            <person name="Peregrin-Alvarez J.M."/>
            <person name="Poole C."/>
            <person name="Ren Q."/>
            <person name="Saunders L."/>
            <person name="Sluder A.E."/>
            <person name="Smith K."/>
            <person name="Stanke M."/>
            <person name="Unnasch T.R."/>
            <person name="Ware J."/>
            <person name="Wei A.D."/>
            <person name="Weil G."/>
            <person name="Williams D.J."/>
            <person name="Zhang Y."/>
            <person name="Williams S.A."/>
            <person name="Fraser-Liggett C."/>
            <person name="Slatko B."/>
            <person name="Blaxter M.L."/>
            <person name="Scott A.L."/>
        </authorList>
    </citation>
    <scope>NUCLEOTIDE SEQUENCE [LARGE SCALE GENOMIC DNA]</scope>
</reference>
<evidence type="ECO:0000250" key="1"/>
<evidence type="ECO:0000255" key="2"/>
<evidence type="ECO:0000305" key="3"/>
<protein>
    <recommendedName>
        <fullName>Probable spastin homolog Bm1_53365</fullName>
        <ecNumber>5.6.1.1</ecNumber>
    </recommendedName>
</protein>
<comment type="function">
    <text evidence="1">Severs microtubules, probably in an ATP-dependent fashion.</text>
</comment>
<comment type="catalytic activity">
    <reaction>
        <text>n ATP + n H2O + a microtubule = n ADP + n phosphate + (n+1) alpha/beta tubulin heterodimers.</text>
        <dbReference type="EC" id="5.6.1.1"/>
    </reaction>
</comment>
<comment type="subunit">
    <text evidence="1">Homohexamer. The homohexamer is stabilized by ATP-binding. The homohexamer may adopt a ring conformation through which microtubules pass prior to being severed. Interacts with microtubules (By similarity).</text>
</comment>
<comment type="subcellular location">
    <subcellularLocation>
        <location evidence="1">Cytoplasm</location>
        <location evidence="1">Cytoskeleton</location>
    </subcellularLocation>
    <subcellularLocation>
        <location evidence="1">Cytoplasm</location>
        <location evidence="1">Perinuclear region</location>
    </subcellularLocation>
</comment>
<comment type="similarity">
    <text evidence="3">Belongs to the AAA ATPase family. Spastin subfamily.</text>
</comment>
<comment type="caution">
    <text evidence="3">Lacks the conserved MIT domain, which is one of the features of the spastin family.</text>
</comment>
<feature type="chain" id="PRO_0000367130" description="Probable spastin homolog Bm1_53365">
    <location>
        <begin position="1"/>
        <end position="454"/>
    </location>
</feature>
<feature type="binding site" evidence="2">
    <location>
        <begin position="218"/>
        <end position="225"/>
    </location>
    <ligand>
        <name>ATP</name>
        <dbReference type="ChEBI" id="CHEBI:30616"/>
    </ligand>
</feature>
<organism>
    <name type="scientific">Brugia malayi</name>
    <name type="common">Filarial nematode worm</name>
    <dbReference type="NCBI Taxonomy" id="6279"/>
    <lineage>
        <taxon>Eukaryota</taxon>
        <taxon>Metazoa</taxon>
        <taxon>Ecdysozoa</taxon>
        <taxon>Nematoda</taxon>
        <taxon>Chromadorea</taxon>
        <taxon>Rhabditida</taxon>
        <taxon>Spirurina</taxon>
        <taxon>Spiruromorpha</taxon>
        <taxon>Filarioidea</taxon>
        <taxon>Onchocercidae</taxon>
        <taxon>Brugia</taxon>
    </lineage>
</organism>
<accession>A8QFF6</accession>
<sequence>MLHPQKLEQQNYETFNKAYLKSKQLVTEGVSIDEISSNNDEQRKRIAMEKYRMGIEYFEKALKISPDKVYPEKRSEVITHREAMKRNLEATKGRLSDLEKMFPSKGNRNLQHRPVQFVSPSISKPQTAQLSSRPISSEKKNINYSNARTRSNLLKGVDDKFGGPLLNEILNQDDVKMSDIIGAETAKRALEETVILPTVNPSLFSGLRQPAQGILLFGPPGNGKTLLARAVAGECGSTMFLNVSAASLTSKWVGDAEKIVRALFQIARNGQPTIIFIDEIDSILCERNEKETEVSRRMKTEFLIQMDGMLSSKDDRLLVIGATNRPEELDSAILRRFPKRILIDVPNAAARLKLIMSLLEKTKTSFDLGLTQRQILAEWTHGYSNSDLVALCREAAMVPIRDLSRKDIKNLVSTELRPITLRDFEIAMKAIKPSTNERMLQKLRKYAATAGQSD</sequence>
<keyword id="KW-0067">ATP-binding</keyword>
<keyword id="KW-0963">Cytoplasm</keyword>
<keyword id="KW-0206">Cytoskeleton</keyword>
<keyword id="KW-0413">Isomerase</keyword>
<keyword id="KW-0493">Microtubule</keyword>
<keyword id="KW-0547">Nucleotide-binding</keyword>
<keyword id="KW-1185">Reference proteome</keyword>
<name>SPAST_BRUMA</name>